<accession>P0DJS6</accession>
<dbReference type="EMBL" id="M81585">
    <property type="status" value="NOT_ANNOTATED_CDS"/>
    <property type="molecule type" value="Unassigned_RNA"/>
</dbReference>
<dbReference type="SMR" id="P0DJS6"/>
<dbReference type="GO" id="GO:0003723">
    <property type="term" value="F:RNA binding"/>
    <property type="evidence" value="ECO:0007669"/>
    <property type="project" value="InterPro"/>
</dbReference>
<dbReference type="GO" id="GO:0039694">
    <property type="term" value="P:viral RNA genome replication"/>
    <property type="evidence" value="ECO:0007669"/>
    <property type="project" value="InterPro"/>
</dbReference>
<dbReference type="GO" id="GO:0075523">
    <property type="term" value="P:viral translational frameshifting"/>
    <property type="evidence" value="ECO:0007669"/>
    <property type="project" value="UniProtKB-KW"/>
</dbReference>
<dbReference type="FunFam" id="3.40.91.90:FF:000001">
    <property type="entry name" value="Polymerase acidic protein"/>
    <property type="match status" value="1"/>
</dbReference>
<dbReference type="Gene3D" id="3.40.91.90">
    <property type="entry name" value="Influenza RNA-dependent RNA polymerase subunit PA, endonuclease domain"/>
    <property type="match status" value="1"/>
</dbReference>
<dbReference type="InterPro" id="IPR001009">
    <property type="entry name" value="PA/PA-X"/>
</dbReference>
<dbReference type="InterPro" id="IPR038372">
    <property type="entry name" value="PA/PA-X_sf"/>
</dbReference>
<dbReference type="Pfam" id="PF00603">
    <property type="entry name" value="Flu_PA"/>
    <property type="match status" value="1"/>
</dbReference>
<organism>
    <name type="scientific">Influenza A virus (strain A/Leningrad/134/47/1957 H2N2)</name>
    <dbReference type="NCBI Taxonomy" id="380983"/>
    <lineage>
        <taxon>Viruses</taxon>
        <taxon>Riboviria</taxon>
        <taxon>Orthornavirae</taxon>
        <taxon>Negarnaviricota</taxon>
        <taxon>Polyploviricotina</taxon>
        <taxon>Insthoviricetes</taxon>
        <taxon>Articulavirales</taxon>
        <taxon>Orthomyxoviridae</taxon>
        <taxon>Alphainfluenzavirus</taxon>
        <taxon>Alphainfluenzavirus influenzae</taxon>
        <taxon>Influenza A virus</taxon>
    </lineage>
</organism>
<keyword id="KW-1132">Decay of host mRNAs by virus</keyword>
<keyword id="KW-1262">Eukaryotic host gene expression shutoff by virus</keyword>
<keyword id="KW-1035">Host cytoplasm</keyword>
<keyword id="KW-1190">Host gene expression shutoff by virus</keyword>
<keyword id="KW-1192">Host mRNA suppression by virus</keyword>
<keyword id="KW-1048">Host nucleus</keyword>
<keyword id="KW-0945">Host-virus interaction</keyword>
<keyword id="KW-0688">Ribosomal frameshifting</keyword>
<comment type="function">
    <text evidence="1 4">Plays a major role in the shutoff of the host protein expression by cleaving mRNAs probably via an endonuclease activity. This host shutoff allows the virus to escape from the host antiviral response (By similarity). Hijacks host RNA splicing machinery to selectively target host RNAs containing introns for destruction. This may explain the preferential degradation of RNAs that have undergone co- or post-transcriptional processing (By similarity).</text>
</comment>
<comment type="subcellular location">
    <subcellularLocation>
        <location evidence="4">Host cytoplasm</location>
    </subcellularLocation>
    <subcellularLocation>
        <location evidence="4">Host nucleus</location>
    </subcellularLocation>
</comment>
<comment type="alternative products">
    <event type="ribosomal frameshifting"/>
    <isoform>
        <id>P0DJS6-1</id>
        <name>PA-X</name>
        <sequence type="displayed"/>
    </isoform>
    <isoform>
        <id>P67922-1</id>
        <name>PA</name>
        <sequence type="external"/>
    </isoform>
</comment>
<comment type="domain">
    <text evidence="1 4">The probable endonuclease active site in the N-terminus and the basic amino acid cluster in the C-terminus are important for the shutoff activity. The C-terminus acts as a nuclear localization signal (By similarity). The C-terminus is recruited to host protein complexes involved in nuclear Pol II RNA processing (By similarity).</text>
</comment>
<comment type="similarity">
    <text evidence="5">Belongs to the influenza viruses PA-X family.</text>
</comment>
<protein>
    <recommendedName>
        <fullName>Protein PA-X</fullName>
    </recommendedName>
</protein>
<sequence>MEEFVRQCFNPMIVELAEKAMKEYGEDRKIETNKFAAICTHLEVCFMYSDFHFINEQGESIIVELDDPNALLKHRFEIIEGRDRTMAWTVVNSICNTTGAEKPKFLPDLYDYKENRFIEIGVTRREVHIYYLEKANKIKSEKTHIHIFSFTGEEMATKADYTLDEESRARIKTRLFTIRQEMASRGLWDSFVSPKEAKKQLKKDLKSQGQCAGSPTKVSRRTSPALRILEPMWMDSNPTATLRASFLKCPKK</sequence>
<organismHost>
    <name type="scientific">Aves</name>
    <dbReference type="NCBI Taxonomy" id="8782"/>
</organismHost>
<organismHost>
    <name type="scientific">Homo sapiens</name>
    <name type="common">Human</name>
    <dbReference type="NCBI Taxonomy" id="9606"/>
</organismHost>
<proteinExistence type="inferred from homology"/>
<evidence type="ECO:0000250" key="1">
    <source>
        <dbReference type="UniProtKB" id="P0CK64"/>
    </source>
</evidence>
<evidence type="ECO:0000250" key="2">
    <source>
        <dbReference type="UniProtKB" id="P0CK68"/>
    </source>
</evidence>
<evidence type="ECO:0000250" key="3">
    <source>
        <dbReference type="UniProtKB" id="P0DJW8"/>
    </source>
</evidence>
<evidence type="ECO:0000250" key="4">
    <source>
        <dbReference type="UniProtKB" id="P0DXO5"/>
    </source>
</evidence>
<evidence type="ECO:0000305" key="5"/>
<gene>
    <name type="primary">PA</name>
</gene>
<name>PAX_I57A3</name>
<reference key="1">
    <citation type="journal article" date="1992" name="Virology">
        <title>Sequence changes in the live attenuated, cold-adapted variants of influenza A/Leningrad/134/57 (H2N2) virus.</title>
        <authorList>
            <person name="Klimov A.I."/>
            <person name="Cox N.J."/>
            <person name="Yotov W.V."/>
            <person name="Rocha E."/>
            <person name="Alexandrova G.I."/>
            <person name="Kendal A.P."/>
        </authorList>
    </citation>
    <scope>NUCLEOTIDE SEQUENCE</scope>
</reference>
<feature type="chain" id="PRO_0000419389" description="Protein PA-X">
    <location>
        <begin position="1"/>
        <end position="252"/>
    </location>
</feature>
<feature type="active site" evidence="2">
    <location>
        <position position="80"/>
    </location>
</feature>
<feature type="active site" evidence="2">
    <location>
        <position position="108"/>
    </location>
</feature>
<feature type="site" description="Important for efficient shutoff activity and nuclear localization" evidence="4">
    <location>
        <position position="195"/>
    </location>
</feature>
<feature type="site" description="Important for efficient shutoff activity and nuclear localization" evidence="4">
    <location>
        <position position="198"/>
    </location>
</feature>
<feature type="site" description="Important for efficient shutoff activity and nuclear localization" evidence="4">
    <location>
        <position position="199"/>
    </location>
</feature>
<feature type="site" description="Important for efficient shutoff activity" evidence="3">
    <location>
        <position position="202"/>
    </location>
</feature>
<feature type="site" description="Important for efficient shutoff activity" evidence="3">
    <location>
        <position position="203"/>
    </location>
</feature>
<feature type="site" description="Important for efficient shutoff activity" evidence="3">
    <location>
        <position position="206"/>
    </location>
</feature>